<evidence type="ECO:0000250" key="1"/>
<evidence type="ECO:0000305" key="2"/>
<keyword id="KW-0456">Lyase</keyword>
<keyword id="KW-0479">Metal-binding</keyword>
<keyword id="KW-1185">Reference proteome</keyword>
<protein>
    <recommendedName>
        <fullName>Putative 4-hydroxy-4-methyl-2-oxoglutarate aldolase</fullName>
        <shortName>HMG aldolase</shortName>
        <ecNumber>4.1.3.17</ecNumber>
    </recommendedName>
    <alternativeName>
        <fullName>Oxaloacetate decarboxylase</fullName>
        <shortName>OAA decarboxylase</shortName>
        <ecNumber>4.1.1.112</ecNumber>
    </alternativeName>
    <alternativeName>
        <fullName>Regulator of ribonuclease activity homolog</fullName>
    </alternativeName>
    <alternativeName>
        <fullName>RraA-like protein</fullName>
    </alternativeName>
</protein>
<accession>Q62J86</accession>
<proteinExistence type="inferred from homology"/>
<gene>
    <name type="ordered locus">BMA1593</name>
</gene>
<comment type="function">
    <text evidence="1">Catalyzes the aldol cleavage of 4-hydroxy-4-methyl-2-oxoglutarate (HMG) into 2 molecules of pyruvate. Also contains a secondary oxaloacetate (OAA) decarboxylase activity due to the common pyruvate enolate transition state formed following C-C bond cleavage in the retro-aldol and decarboxylation reactions (By similarity).</text>
</comment>
<comment type="catalytic activity">
    <reaction>
        <text>4-hydroxy-4-methyl-2-oxoglutarate = 2 pyruvate</text>
        <dbReference type="Rhea" id="RHEA:22748"/>
        <dbReference type="ChEBI" id="CHEBI:15361"/>
        <dbReference type="ChEBI" id="CHEBI:58276"/>
        <dbReference type="EC" id="4.1.3.17"/>
    </reaction>
</comment>
<comment type="catalytic activity">
    <reaction>
        <text>oxaloacetate + H(+) = pyruvate + CO2</text>
        <dbReference type="Rhea" id="RHEA:15641"/>
        <dbReference type="ChEBI" id="CHEBI:15361"/>
        <dbReference type="ChEBI" id="CHEBI:15378"/>
        <dbReference type="ChEBI" id="CHEBI:16452"/>
        <dbReference type="ChEBI" id="CHEBI:16526"/>
        <dbReference type="EC" id="4.1.1.112"/>
    </reaction>
</comment>
<comment type="cofactor">
    <cofactor evidence="1">
        <name>a divalent metal cation</name>
        <dbReference type="ChEBI" id="CHEBI:60240"/>
    </cofactor>
    <text evidence="1">Divalent metal cation.</text>
</comment>
<comment type="subunit">
    <text evidence="1">Homotrimer.</text>
</comment>
<comment type="similarity">
    <text evidence="2">Belongs to the class II aldolase/RraA-like family.</text>
</comment>
<sequence length="165" mass="17301">MMFATTDLCDAHEDRLAAGTLRVLEPVFRPFGGVRRFAGPAATLKLFEDNSLVRTALEQDGAGRVLVVDGGGSLRCALVGGNLGKLAEKNGWAGIVVNGCVRDSDELAECRVGVLALAAHPRKSDKRGAGVSDAPVDVRGTRIVPGDWIYADADGVLVSDDALLE</sequence>
<name>RRAAH_BURMA</name>
<organism>
    <name type="scientific">Burkholderia mallei (strain ATCC 23344)</name>
    <dbReference type="NCBI Taxonomy" id="243160"/>
    <lineage>
        <taxon>Bacteria</taxon>
        <taxon>Pseudomonadati</taxon>
        <taxon>Pseudomonadota</taxon>
        <taxon>Betaproteobacteria</taxon>
        <taxon>Burkholderiales</taxon>
        <taxon>Burkholderiaceae</taxon>
        <taxon>Burkholderia</taxon>
        <taxon>pseudomallei group</taxon>
    </lineage>
</organism>
<feature type="chain" id="PRO_0000209605" description="Putative 4-hydroxy-4-methyl-2-oxoglutarate aldolase">
    <location>
        <begin position="1"/>
        <end position="165"/>
    </location>
</feature>
<feature type="binding site" evidence="1">
    <location>
        <begin position="80"/>
        <end position="83"/>
    </location>
    <ligand>
        <name>substrate</name>
    </ligand>
</feature>
<feature type="binding site" evidence="1">
    <location>
        <position position="102"/>
    </location>
    <ligand>
        <name>substrate</name>
    </ligand>
</feature>
<feature type="binding site" evidence="1">
    <location>
        <position position="103"/>
    </location>
    <ligand>
        <name>a divalent metal cation</name>
        <dbReference type="ChEBI" id="CHEBI:60240"/>
    </ligand>
</feature>
<reference key="1">
    <citation type="journal article" date="2004" name="Proc. Natl. Acad. Sci. U.S.A.">
        <title>Structural flexibility in the Burkholderia mallei genome.</title>
        <authorList>
            <person name="Nierman W.C."/>
            <person name="DeShazer D."/>
            <person name="Kim H.S."/>
            <person name="Tettelin H."/>
            <person name="Nelson K.E."/>
            <person name="Feldblyum T.V."/>
            <person name="Ulrich R.L."/>
            <person name="Ronning C.M."/>
            <person name="Brinkac L.M."/>
            <person name="Daugherty S.C."/>
            <person name="Davidsen T.D."/>
            <person name="DeBoy R.T."/>
            <person name="Dimitrov G."/>
            <person name="Dodson R.J."/>
            <person name="Durkin A.S."/>
            <person name="Gwinn M.L."/>
            <person name="Haft D.H."/>
            <person name="Khouri H.M."/>
            <person name="Kolonay J.F."/>
            <person name="Madupu R."/>
            <person name="Mohammoud Y."/>
            <person name="Nelson W.C."/>
            <person name="Radune D."/>
            <person name="Romero C.M."/>
            <person name="Sarria S."/>
            <person name="Selengut J."/>
            <person name="Shamblin C."/>
            <person name="Sullivan S.A."/>
            <person name="White O."/>
            <person name="Yu Y."/>
            <person name="Zafar N."/>
            <person name="Zhou L."/>
            <person name="Fraser C.M."/>
        </authorList>
    </citation>
    <scope>NUCLEOTIDE SEQUENCE [LARGE SCALE GENOMIC DNA]</scope>
    <source>
        <strain>ATCC 23344</strain>
    </source>
</reference>
<dbReference type="EC" id="4.1.3.17"/>
<dbReference type="EC" id="4.1.1.112"/>
<dbReference type="EMBL" id="CP000010">
    <property type="protein sequence ID" value="AAU48134.1"/>
    <property type="molecule type" value="Genomic_DNA"/>
</dbReference>
<dbReference type="RefSeq" id="YP_103233.1">
    <property type="nucleotide sequence ID" value="NC_006348.1"/>
</dbReference>
<dbReference type="SMR" id="Q62J86"/>
<dbReference type="KEGG" id="bma:BMA1593"/>
<dbReference type="PATRIC" id="fig|243160.12.peg.1638"/>
<dbReference type="eggNOG" id="COG0684">
    <property type="taxonomic scope" value="Bacteria"/>
</dbReference>
<dbReference type="HOGENOM" id="CLU_072626_4_0_4"/>
<dbReference type="Proteomes" id="UP000006693">
    <property type="component" value="Chromosome 1"/>
</dbReference>
<dbReference type="GO" id="GO:0047443">
    <property type="term" value="F:4-hydroxy-4-methyl-2-oxoglutarate aldolase activity"/>
    <property type="evidence" value="ECO:0007669"/>
    <property type="project" value="UniProtKB-EC"/>
</dbReference>
<dbReference type="GO" id="GO:0046872">
    <property type="term" value="F:metal ion binding"/>
    <property type="evidence" value="ECO:0007669"/>
    <property type="project" value="UniProtKB-KW"/>
</dbReference>
<dbReference type="GO" id="GO:0008948">
    <property type="term" value="F:oxaloacetate decarboxylase activity"/>
    <property type="evidence" value="ECO:0007669"/>
    <property type="project" value="UniProtKB-EC"/>
</dbReference>
<dbReference type="GO" id="GO:0008428">
    <property type="term" value="F:ribonuclease inhibitor activity"/>
    <property type="evidence" value="ECO:0007669"/>
    <property type="project" value="InterPro"/>
</dbReference>
<dbReference type="GO" id="GO:0051252">
    <property type="term" value="P:regulation of RNA metabolic process"/>
    <property type="evidence" value="ECO:0007669"/>
    <property type="project" value="InterPro"/>
</dbReference>
<dbReference type="CDD" id="cd16841">
    <property type="entry name" value="RraA_family"/>
    <property type="match status" value="1"/>
</dbReference>
<dbReference type="Gene3D" id="3.50.30.40">
    <property type="entry name" value="Ribonuclease E inhibitor RraA/RraA-like"/>
    <property type="match status" value="1"/>
</dbReference>
<dbReference type="InterPro" id="IPR010203">
    <property type="entry name" value="RraA"/>
</dbReference>
<dbReference type="InterPro" id="IPR005493">
    <property type="entry name" value="RraA/RraA-like"/>
</dbReference>
<dbReference type="InterPro" id="IPR036704">
    <property type="entry name" value="RraA/RraA-like_sf"/>
</dbReference>
<dbReference type="NCBIfam" id="TIGR01935">
    <property type="entry name" value="NOT-MenG"/>
    <property type="match status" value="1"/>
</dbReference>
<dbReference type="NCBIfam" id="NF006875">
    <property type="entry name" value="PRK09372.1"/>
    <property type="match status" value="1"/>
</dbReference>
<dbReference type="PANTHER" id="PTHR33254">
    <property type="entry name" value="4-HYDROXY-4-METHYL-2-OXOGLUTARATE ALDOLASE 3-RELATED"/>
    <property type="match status" value="1"/>
</dbReference>
<dbReference type="PANTHER" id="PTHR33254:SF4">
    <property type="entry name" value="4-HYDROXY-4-METHYL-2-OXOGLUTARATE ALDOLASE 3-RELATED"/>
    <property type="match status" value="1"/>
</dbReference>
<dbReference type="Pfam" id="PF03737">
    <property type="entry name" value="RraA-like"/>
    <property type="match status" value="1"/>
</dbReference>
<dbReference type="SUPFAM" id="SSF89562">
    <property type="entry name" value="RraA-like"/>
    <property type="match status" value="1"/>
</dbReference>